<keyword id="KW-0963">Cytoplasm</keyword>
<keyword id="KW-0489">Methyltransferase</keyword>
<keyword id="KW-0694">RNA-binding</keyword>
<keyword id="KW-0698">rRNA processing</keyword>
<keyword id="KW-0949">S-adenosyl-L-methionine</keyword>
<keyword id="KW-0808">Transferase</keyword>
<reference key="1">
    <citation type="submission" date="2008-06" db="EMBL/GenBank/DDBJ databases">
        <title>Genome and proteome analysis of A. pleuropneumoniae serotype 7.</title>
        <authorList>
            <person name="Linke B."/>
            <person name="Buettner F."/>
            <person name="Martinez-Arias R."/>
            <person name="Goesmann A."/>
            <person name="Baltes N."/>
            <person name="Tegetmeyer H."/>
            <person name="Singh M."/>
            <person name="Gerlach G.F."/>
        </authorList>
    </citation>
    <scope>NUCLEOTIDE SEQUENCE [LARGE SCALE GENOMIC DNA]</scope>
    <source>
        <strain>AP76</strain>
    </source>
</reference>
<organism>
    <name type="scientific">Actinobacillus pleuropneumoniae serotype 7 (strain AP76)</name>
    <dbReference type="NCBI Taxonomy" id="537457"/>
    <lineage>
        <taxon>Bacteria</taxon>
        <taxon>Pseudomonadati</taxon>
        <taxon>Pseudomonadota</taxon>
        <taxon>Gammaproteobacteria</taxon>
        <taxon>Pasteurellales</taxon>
        <taxon>Pasteurellaceae</taxon>
        <taxon>Actinobacillus</taxon>
    </lineage>
</organism>
<sequence length="712" mass="81272">MTTQITYFATAARGFEEMLKTELEQICQAECKVAQGGVHFTTTQRGAYQALLHSRLASRILLPLVTTKIFSDLDLYATIVGINWAEIFDPRDTFFVDFNGTNREIRNTQFGAMRVKDGVVDYFERKGFARPTVDKDHADIRIHVYLDRENMVVSLDLSGDALHMRGYREDTGKAPLRETLAAAIILRSGWQKGTPLVDPMCGSGTLLIEAAQMQAGIAPQLHRKHWGFNAWKGHQQAVWKEVLEQAYLQQNEEIQPLFFGFDLDHRVLAKAKQNARNAGVAHLIQWQQGDVAALKNPCPEQVGTVICNPPYGERLGTTPALIALYSVFGQRLKHQFSGWNASIFSGEPELLNCLRLRSHRQFKAKNGPLDCLQKNYQISERAVAEQQADELKFEQNAQVAPDFANRLTKNIKKIEKWAKQQGINAYRLYDADLPEYNLAVDRYDDHIVVQEYAAPKNIDEQKARQRLLDAVSATLYVTGVETNKLVLKVRQKQKGTNQYEKLANKGDYFYVTEYGAKLWVNLTDYLDTGLFLDHRLTRKMVGQMAKGKTFLNLFAYTGSATIHAALNGAKSTTTIDMSNTYLNWAEQNLELNNLPLRNNRLFQADCLQWLAECRERFELIFVDPPTFSNSKRMEDSWDVQRDHIKLMTQLKRILTADGIIVFSNNKRGFKMDFEGLAELGLQAENISHKTLPLDFERNPQIHNCWIIRHIEN</sequence>
<evidence type="ECO:0000255" key="1">
    <source>
        <dbReference type="HAMAP-Rule" id="MF_01858"/>
    </source>
</evidence>
<proteinExistence type="inferred from homology"/>
<name>RLMKL_ACTP7</name>
<feature type="chain" id="PRO_0000366720" description="Ribosomal RNA large subunit methyltransferase K/L">
    <location>
        <begin position="1"/>
        <end position="712"/>
    </location>
</feature>
<feature type="domain" description="THUMP" evidence="1">
    <location>
        <begin position="46"/>
        <end position="157"/>
    </location>
</feature>
<protein>
    <recommendedName>
        <fullName evidence="1">Ribosomal RNA large subunit methyltransferase K/L</fullName>
    </recommendedName>
    <domain>
        <recommendedName>
            <fullName evidence="1">23S rRNA m2G2445 methyltransferase</fullName>
            <ecNumber evidence="1">2.1.1.173</ecNumber>
        </recommendedName>
        <alternativeName>
            <fullName evidence="1">rRNA (guanine-N(2)-)-methyltransferase RlmL</fullName>
        </alternativeName>
    </domain>
    <domain>
        <recommendedName>
            <fullName evidence="1">23S rRNA m7G2069 methyltransferase</fullName>
            <ecNumber evidence="1">2.1.1.264</ecNumber>
        </recommendedName>
        <alternativeName>
            <fullName evidence="1">rRNA (guanine-N(7)-)-methyltransferase RlmK</fullName>
        </alternativeName>
    </domain>
</protein>
<comment type="function">
    <text evidence="1">Specifically methylates the guanine in position 2445 (m2G2445) and the guanine in position 2069 (m7G2069) of 23S rRNA.</text>
</comment>
<comment type="catalytic activity">
    <reaction evidence="1">
        <text>guanosine(2445) in 23S rRNA + S-adenosyl-L-methionine = N(2)-methylguanosine(2445) in 23S rRNA + S-adenosyl-L-homocysteine + H(+)</text>
        <dbReference type="Rhea" id="RHEA:42740"/>
        <dbReference type="Rhea" id="RHEA-COMP:10215"/>
        <dbReference type="Rhea" id="RHEA-COMP:10216"/>
        <dbReference type="ChEBI" id="CHEBI:15378"/>
        <dbReference type="ChEBI" id="CHEBI:57856"/>
        <dbReference type="ChEBI" id="CHEBI:59789"/>
        <dbReference type="ChEBI" id="CHEBI:74269"/>
        <dbReference type="ChEBI" id="CHEBI:74481"/>
        <dbReference type="EC" id="2.1.1.173"/>
    </reaction>
</comment>
<comment type="catalytic activity">
    <reaction evidence="1">
        <text>guanosine(2069) in 23S rRNA + S-adenosyl-L-methionine = N(2)-methylguanosine(2069) in 23S rRNA + S-adenosyl-L-homocysteine + H(+)</text>
        <dbReference type="Rhea" id="RHEA:43772"/>
        <dbReference type="Rhea" id="RHEA-COMP:10688"/>
        <dbReference type="Rhea" id="RHEA-COMP:10689"/>
        <dbReference type="ChEBI" id="CHEBI:15378"/>
        <dbReference type="ChEBI" id="CHEBI:57856"/>
        <dbReference type="ChEBI" id="CHEBI:59789"/>
        <dbReference type="ChEBI" id="CHEBI:74269"/>
        <dbReference type="ChEBI" id="CHEBI:74481"/>
        <dbReference type="EC" id="2.1.1.264"/>
    </reaction>
</comment>
<comment type="subcellular location">
    <subcellularLocation>
        <location evidence="1">Cytoplasm</location>
    </subcellularLocation>
</comment>
<comment type="similarity">
    <text evidence="1">Belongs to the methyltransferase superfamily. RlmKL family.</text>
</comment>
<gene>
    <name evidence="1" type="primary">rlmL</name>
    <name type="ordered locus">APP7_0060</name>
</gene>
<dbReference type="EC" id="2.1.1.173" evidence="1"/>
<dbReference type="EC" id="2.1.1.264" evidence="1"/>
<dbReference type="EMBL" id="CP001091">
    <property type="protein sequence ID" value="ACE60712.1"/>
    <property type="molecule type" value="Genomic_DNA"/>
</dbReference>
<dbReference type="RefSeq" id="WP_005616547.1">
    <property type="nucleotide sequence ID" value="NC_010939.1"/>
</dbReference>
<dbReference type="SMR" id="B3GZQ0"/>
<dbReference type="KEGG" id="apa:APP7_0060"/>
<dbReference type="HOGENOM" id="CLU_014042_2_0_6"/>
<dbReference type="Proteomes" id="UP000001226">
    <property type="component" value="Chromosome"/>
</dbReference>
<dbReference type="GO" id="GO:0005737">
    <property type="term" value="C:cytoplasm"/>
    <property type="evidence" value="ECO:0007669"/>
    <property type="project" value="UniProtKB-SubCell"/>
</dbReference>
<dbReference type="GO" id="GO:0052915">
    <property type="term" value="F:23S rRNA (guanine(2445)-N(2))-methyltransferase activity"/>
    <property type="evidence" value="ECO:0007669"/>
    <property type="project" value="UniProtKB-UniRule"/>
</dbReference>
<dbReference type="GO" id="GO:0003723">
    <property type="term" value="F:RNA binding"/>
    <property type="evidence" value="ECO:0007669"/>
    <property type="project" value="UniProtKB-KW"/>
</dbReference>
<dbReference type="GO" id="GO:0070043">
    <property type="term" value="F:rRNA (guanine-N7-)-methyltransferase activity"/>
    <property type="evidence" value="ECO:0007669"/>
    <property type="project" value="UniProtKB-UniRule"/>
</dbReference>
<dbReference type="CDD" id="cd02440">
    <property type="entry name" value="AdoMet_MTases"/>
    <property type="match status" value="1"/>
</dbReference>
<dbReference type="CDD" id="cd11715">
    <property type="entry name" value="THUMP_AdoMetMT"/>
    <property type="match status" value="1"/>
</dbReference>
<dbReference type="FunFam" id="3.30.750.80:FF:000001">
    <property type="entry name" value="Ribosomal RNA large subunit methyltransferase K/L"/>
    <property type="match status" value="1"/>
</dbReference>
<dbReference type="FunFam" id="3.40.50.150:FF:000039">
    <property type="entry name" value="Ribosomal RNA large subunit methyltransferase K/L"/>
    <property type="match status" value="1"/>
</dbReference>
<dbReference type="Gene3D" id="3.30.2130.30">
    <property type="match status" value="1"/>
</dbReference>
<dbReference type="Gene3D" id="3.30.750.80">
    <property type="entry name" value="RNA methyltransferase domain (HRMD) like"/>
    <property type="match status" value="1"/>
</dbReference>
<dbReference type="Gene3D" id="3.40.50.150">
    <property type="entry name" value="Vaccinia Virus protein VP39"/>
    <property type="match status" value="2"/>
</dbReference>
<dbReference type="HAMAP" id="MF_01858">
    <property type="entry name" value="23SrRNA_methyltr_KL"/>
    <property type="match status" value="1"/>
</dbReference>
<dbReference type="InterPro" id="IPR017244">
    <property type="entry name" value="23SrRNA_methyltr_KL"/>
</dbReference>
<dbReference type="InterPro" id="IPR002052">
    <property type="entry name" value="DNA_methylase_N6_adenine_CS"/>
</dbReference>
<dbReference type="InterPro" id="IPR000241">
    <property type="entry name" value="RlmKL-like_Mtase"/>
</dbReference>
<dbReference type="InterPro" id="IPR053943">
    <property type="entry name" value="RlmKL-like_Mtase_CS"/>
</dbReference>
<dbReference type="InterPro" id="IPR054170">
    <property type="entry name" value="RlmL_1st"/>
</dbReference>
<dbReference type="InterPro" id="IPR019614">
    <property type="entry name" value="SAM-dep_methyl-trfase"/>
</dbReference>
<dbReference type="InterPro" id="IPR029063">
    <property type="entry name" value="SAM-dependent_MTases_sf"/>
</dbReference>
<dbReference type="InterPro" id="IPR004114">
    <property type="entry name" value="THUMP_dom"/>
</dbReference>
<dbReference type="NCBIfam" id="NF008748">
    <property type="entry name" value="PRK11783.1"/>
    <property type="match status" value="1"/>
</dbReference>
<dbReference type="PANTHER" id="PTHR47313">
    <property type="entry name" value="RIBOSOMAL RNA LARGE SUBUNIT METHYLTRANSFERASE K/L"/>
    <property type="match status" value="1"/>
</dbReference>
<dbReference type="PANTHER" id="PTHR47313:SF1">
    <property type="entry name" value="RIBOSOMAL RNA LARGE SUBUNIT METHYLTRANSFERASE K_L"/>
    <property type="match status" value="1"/>
</dbReference>
<dbReference type="Pfam" id="PF10672">
    <property type="entry name" value="Methyltrans_SAM"/>
    <property type="match status" value="1"/>
</dbReference>
<dbReference type="Pfam" id="PF22020">
    <property type="entry name" value="RlmL_1st"/>
    <property type="match status" value="1"/>
</dbReference>
<dbReference type="Pfam" id="PF02926">
    <property type="entry name" value="THUMP"/>
    <property type="match status" value="1"/>
</dbReference>
<dbReference type="Pfam" id="PF01170">
    <property type="entry name" value="UPF0020"/>
    <property type="match status" value="1"/>
</dbReference>
<dbReference type="PIRSF" id="PIRSF037618">
    <property type="entry name" value="RNA_Mtase_bacteria_prd"/>
    <property type="match status" value="1"/>
</dbReference>
<dbReference type="SMART" id="SM00981">
    <property type="entry name" value="THUMP"/>
    <property type="match status" value="1"/>
</dbReference>
<dbReference type="SUPFAM" id="SSF53335">
    <property type="entry name" value="S-adenosyl-L-methionine-dependent methyltransferases"/>
    <property type="match status" value="2"/>
</dbReference>
<dbReference type="PROSITE" id="PS51165">
    <property type="entry name" value="THUMP"/>
    <property type="match status" value="1"/>
</dbReference>
<dbReference type="PROSITE" id="PS01261">
    <property type="entry name" value="UPF0020"/>
    <property type="match status" value="1"/>
</dbReference>
<accession>B3GZQ0</accession>